<feature type="chain" id="PRO_0000053827" description="Uncharacterized acyl-CoA thioester hydrolase YkhA">
    <location>
        <begin position="1"/>
        <end position="172"/>
    </location>
</feature>
<feature type="domain" description="HotDog ACOT-type" evidence="1">
    <location>
        <begin position="10"/>
        <end position="122"/>
    </location>
</feature>
<feature type="region of interest" description="Disordered" evidence="2">
    <location>
        <begin position="148"/>
        <end position="172"/>
    </location>
</feature>
<feature type="sequence conflict" description="In Ref. 1; BAA11257." evidence="3" ref="1">
    <original>W</original>
    <variation>WVNVKPKT</variation>
    <location>
        <position position="172"/>
    </location>
</feature>
<dbReference type="EC" id="3.1.2.-"/>
<dbReference type="EMBL" id="D78189">
    <property type="protein sequence ID" value="BAA11257.1"/>
    <property type="molecule type" value="Genomic_DNA"/>
</dbReference>
<dbReference type="EMBL" id="AJ002571">
    <property type="protein sequence ID" value="CAA05583.1"/>
    <property type="status" value="ALT_INIT"/>
    <property type="molecule type" value="Genomic_DNA"/>
</dbReference>
<dbReference type="EMBL" id="AL009126">
    <property type="protein sequence ID" value="CAB13160.2"/>
    <property type="molecule type" value="Genomic_DNA"/>
</dbReference>
<dbReference type="PIR" id="E69856">
    <property type="entry name" value="E69856"/>
</dbReference>
<dbReference type="RefSeq" id="NP_389186.2">
    <property type="nucleotide sequence ID" value="NC_000964.3"/>
</dbReference>
<dbReference type="RefSeq" id="WP_003244690.1">
    <property type="nucleotide sequence ID" value="NZ_OZ025638.1"/>
</dbReference>
<dbReference type="SMR" id="P49851"/>
<dbReference type="FunCoup" id="P49851">
    <property type="interactions" value="94"/>
</dbReference>
<dbReference type="STRING" id="224308.BSU13030"/>
<dbReference type="PaxDb" id="224308-BSU13030"/>
<dbReference type="EnsemblBacteria" id="CAB13160">
    <property type="protein sequence ID" value="CAB13160"/>
    <property type="gene ID" value="BSU_13030"/>
</dbReference>
<dbReference type="GeneID" id="937988"/>
<dbReference type="KEGG" id="bsu:BSU13030"/>
<dbReference type="PATRIC" id="fig|224308.179.peg.1415"/>
<dbReference type="eggNOG" id="COG1607">
    <property type="taxonomic scope" value="Bacteria"/>
</dbReference>
<dbReference type="InParanoid" id="P49851"/>
<dbReference type="OrthoDB" id="9791628at2"/>
<dbReference type="PhylomeDB" id="P49851"/>
<dbReference type="BioCyc" id="BSUB:BSU13030-MONOMER"/>
<dbReference type="Proteomes" id="UP000001570">
    <property type="component" value="Chromosome"/>
</dbReference>
<dbReference type="GO" id="GO:0005737">
    <property type="term" value="C:cytoplasm"/>
    <property type="evidence" value="ECO:0000318"/>
    <property type="project" value="GO_Central"/>
</dbReference>
<dbReference type="GO" id="GO:0005829">
    <property type="term" value="C:cytosol"/>
    <property type="evidence" value="ECO:0000318"/>
    <property type="project" value="GO_Central"/>
</dbReference>
<dbReference type="GO" id="GO:0052816">
    <property type="term" value="F:long-chain fatty acyl-CoA hydrolase activity"/>
    <property type="evidence" value="ECO:0000318"/>
    <property type="project" value="GO_Central"/>
</dbReference>
<dbReference type="GO" id="GO:0006637">
    <property type="term" value="P:acyl-CoA metabolic process"/>
    <property type="evidence" value="ECO:0000318"/>
    <property type="project" value="GO_Central"/>
</dbReference>
<dbReference type="GO" id="GO:0009062">
    <property type="term" value="P:fatty acid catabolic process"/>
    <property type="evidence" value="ECO:0000318"/>
    <property type="project" value="GO_Central"/>
</dbReference>
<dbReference type="CDD" id="cd03442">
    <property type="entry name" value="BFIT_BACH"/>
    <property type="match status" value="1"/>
</dbReference>
<dbReference type="FunFam" id="3.10.129.10:FF:000027">
    <property type="entry name" value="Uncharacterized acyl-CoA thioester hydrolase"/>
    <property type="match status" value="1"/>
</dbReference>
<dbReference type="Gene3D" id="3.10.129.10">
    <property type="entry name" value="Hotdog Thioesterase"/>
    <property type="match status" value="1"/>
</dbReference>
<dbReference type="InterPro" id="IPR040170">
    <property type="entry name" value="Cytosol_ACT"/>
</dbReference>
<dbReference type="InterPro" id="IPR033120">
    <property type="entry name" value="HOTDOG_ACOT"/>
</dbReference>
<dbReference type="InterPro" id="IPR029069">
    <property type="entry name" value="HotDog_dom_sf"/>
</dbReference>
<dbReference type="InterPro" id="IPR006683">
    <property type="entry name" value="Thioestr_dom"/>
</dbReference>
<dbReference type="PANTHER" id="PTHR11049">
    <property type="entry name" value="ACYL COENZYME A THIOESTER HYDROLASE"/>
    <property type="match status" value="1"/>
</dbReference>
<dbReference type="PANTHER" id="PTHR11049:SF24">
    <property type="entry name" value="CYTOSOLIC ACYL COENZYME A THIOESTER HYDROLASE"/>
    <property type="match status" value="1"/>
</dbReference>
<dbReference type="Pfam" id="PF03061">
    <property type="entry name" value="4HBT"/>
    <property type="match status" value="1"/>
</dbReference>
<dbReference type="SUPFAM" id="SSF54637">
    <property type="entry name" value="Thioesterase/thiol ester dehydrase-isomerase"/>
    <property type="match status" value="1"/>
</dbReference>
<dbReference type="PROSITE" id="PS51770">
    <property type="entry name" value="HOTDOG_ACOT"/>
    <property type="match status" value="1"/>
</dbReference>
<protein>
    <recommendedName>
        <fullName>Uncharacterized acyl-CoA thioester hydrolase YkhA</fullName>
        <ecNumber>3.1.2.-</ecNumber>
    </recommendedName>
</protein>
<name>YKHA_BACSU</name>
<keyword id="KW-0378">Hydrolase</keyword>
<keyword id="KW-1185">Reference proteome</keyword>
<proteinExistence type="inferred from homology"/>
<sequence>METPETRFCKESKVVKTSRVFPLDTNNHNTLFGGKLMSYIDDIASISAARHCRRETVTASMDSVDFLKPIGQKDSVCLESYVTWVGTSSMEVFVKVIKEHLMTGERELAATSFLTFVALDSNGKPVPVPRVVPETEEEIMLHNTAVQRANERKNRKRHSQALANALGTDKPW</sequence>
<gene>
    <name type="primary">ykhA</name>
    <name type="ordered locus">BSU13030</name>
</gene>
<evidence type="ECO:0000255" key="1">
    <source>
        <dbReference type="PROSITE-ProRule" id="PRU01106"/>
    </source>
</evidence>
<evidence type="ECO:0000256" key="2">
    <source>
        <dbReference type="SAM" id="MobiDB-lite"/>
    </source>
</evidence>
<evidence type="ECO:0000305" key="3"/>
<comment type="similarity">
    <text evidence="3">Belongs to the acyl coenzyme A hydrolase family.</text>
</comment>
<comment type="sequence caution" evidence="3">
    <conflict type="erroneous initiation">
        <sequence resource="EMBL-CDS" id="CAA05583"/>
    </conflict>
</comment>
<reference key="1">
    <citation type="journal article" date="1996" name="J. Bacteriol.">
        <title>Oxygen-controlled regulation of the flavohemoglobin gene in Bacillus subtilis.</title>
        <authorList>
            <person name="Lacelle M."/>
            <person name="Kumano M."/>
            <person name="Kurita K."/>
            <person name="Yamane K."/>
            <person name="Zuber P."/>
            <person name="Nakano M.M."/>
        </authorList>
    </citation>
    <scope>NUCLEOTIDE SEQUENCE [GENOMIC DNA]</scope>
    <source>
        <strain>168</strain>
    </source>
</reference>
<reference key="2">
    <citation type="submission" date="1997-11" db="EMBL/GenBank/DDBJ databases">
        <title>Sequence of the Bacillus subtilis genome between xlyA and ykoR.</title>
        <authorList>
            <person name="Devine K.M."/>
        </authorList>
    </citation>
    <scope>NUCLEOTIDE SEQUENCE [GENOMIC DNA]</scope>
    <source>
        <strain>168</strain>
    </source>
</reference>
<reference key="3">
    <citation type="journal article" date="1997" name="Nature">
        <title>The complete genome sequence of the Gram-positive bacterium Bacillus subtilis.</title>
        <authorList>
            <person name="Kunst F."/>
            <person name="Ogasawara N."/>
            <person name="Moszer I."/>
            <person name="Albertini A.M."/>
            <person name="Alloni G."/>
            <person name="Azevedo V."/>
            <person name="Bertero M.G."/>
            <person name="Bessieres P."/>
            <person name="Bolotin A."/>
            <person name="Borchert S."/>
            <person name="Borriss R."/>
            <person name="Boursier L."/>
            <person name="Brans A."/>
            <person name="Braun M."/>
            <person name="Brignell S.C."/>
            <person name="Bron S."/>
            <person name="Brouillet S."/>
            <person name="Bruschi C.V."/>
            <person name="Caldwell B."/>
            <person name="Capuano V."/>
            <person name="Carter N.M."/>
            <person name="Choi S.-K."/>
            <person name="Codani J.-J."/>
            <person name="Connerton I.F."/>
            <person name="Cummings N.J."/>
            <person name="Daniel R.A."/>
            <person name="Denizot F."/>
            <person name="Devine K.M."/>
            <person name="Duesterhoeft A."/>
            <person name="Ehrlich S.D."/>
            <person name="Emmerson P.T."/>
            <person name="Entian K.-D."/>
            <person name="Errington J."/>
            <person name="Fabret C."/>
            <person name="Ferrari E."/>
            <person name="Foulger D."/>
            <person name="Fritz C."/>
            <person name="Fujita M."/>
            <person name="Fujita Y."/>
            <person name="Fuma S."/>
            <person name="Galizzi A."/>
            <person name="Galleron N."/>
            <person name="Ghim S.-Y."/>
            <person name="Glaser P."/>
            <person name="Goffeau A."/>
            <person name="Golightly E.J."/>
            <person name="Grandi G."/>
            <person name="Guiseppi G."/>
            <person name="Guy B.J."/>
            <person name="Haga K."/>
            <person name="Haiech J."/>
            <person name="Harwood C.R."/>
            <person name="Henaut A."/>
            <person name="Hilbert H."/>
            <person name="Holsappel S."/>
            <person name="Hosono S."/>
            <person name="Hullo M.-F."/>
            <person name="Itaya M."/>
            <person name="Jones L.-M."/>
            <person name="Joris B."/>
            <person name="Karamata D."/>
            <person name="Kasahara Y."/>
            <person name="Klaerr-Blanchard M."/>
            <person name="Klein C."/>
            <person name="Kobayashi Y."/>
            <person name="Koetter P."/>
            <person name="Koningstein G."/>
            <person name="Krogh S."/>
            <person name="Kumano M."/>
            <person name="Kurita K."/>
            <person name="Lapidus A."/>
            <person name="Lardinois S."/>
            <person name="Lauber J."/>
            <person name="Lazarevic V."/>
            <person name="Lee S.-M."/>
            <person name="Levine A."/>
            <person name="Liu H."/>
            <person name="Masuda S."/>
            <person name="Mauel C."/>
            <person name="Medigue C."/>
            <person name="Medina N."/>
            <person name="Mellado R.P."/>
            <person name="Mizuno M."/>
            <person name="Moestl D."/>
            <person name="Nakai S."/>
            <person name="Noback M."/>
            <person name="Noone D."/>
            <person name="O'Reilly M."/>
            <person name="Ogawa K."/>
            <person name="Ogiwara A."/>
            <person name="Oudega B."/>
            <person name="Park S.-H."/>
            <person name="Parro V."/>
            <person name="Pohl T.M."/>
            <person name="Portetelle D."/>
            <person name="Porwollik S."/>
            <person name="Prescott A.M."/>
            <person name="Presecan E."/>
            <person name="Pujic P."/>
            <person name="Purnelle B."/>
            <person name="Rapoport G."/>
            <person name="Rey M."/>
            <person name="Reynolds S."/>
            <person name="Rieger M."/>
            <person name="Rivolta C."/>
            <person name="Rocha E."/>
            <person name="Roche B."/>
            <person name="Rose M."/>
            <person name="Sadaie Y."/>
            <person name="Sato T."/>
            <person name="Scanlan E."/>
            <person name="Schleich S."/>
            <person name="Schroeter R."/>
            <person name="Scoffone F."/>
            <person name="Sekiguchi J."/>
            <person name="Sekowska A."/>
            <person name="Seror S.J."/>
            <person name="Serror P."/>
            <person name="Shin B.-S."/>
            <person name="Soldo B."/>
            <person name="Sorokin A."/>
            <person name="Tacconi E."/>
            <person name="Takagi T."/>
            <person name="Takahashi H."/>
            <person name="Takemaru K."/>
            <person name="Takeuchi M."/>
            <person name="Tamakoshi A."/>
            <person name="Tanaka T."/>
            <person name="Terpstra P."/>
            <person name="Tognoni A."/>
            <person name="Tosato V."/>
            <person name="Uchiyama S."/>
            <person name="Vandenbol M."/>
            <person name="Vannier F."/>
            <person name="Vassarotti A."/>
            <person name="Viari A."/>
            <person name="Wambutt R."/>
            <person name="Wedler E."/>
            <person name="Wedler H."/>
            <person name="Weitzenegger T."/>
            <person name="Winters P."/>
            <person name="Wipat A."/>
            <person name="Yamamoto H."/>
            <person name="Yamane K."/>
            <person name="Yasumoto K."/>
            <person name="Yata K."/>
            <person name="Yoshida K."/>
            <person name="Yoshikawa H.-F."/>
            <person name="Zumstein E."/>
            <person name="Yoshikawa H."/>
            <person name="Danchin A."/>
        </authorList>
    </citation>
    <scope>NUCLEOTIDE SEQUENCE [LARGE SCALE GENOMIC DNA]</scope>
    <source>
        <strain>168</strain>
    </source>
</reference>
<reference key="4">
    <citation type="journal article" date="1999" name="Genome Res.">
        <title>Detecting and analyzing DNA sequencing errors: toward a higher quality of the Bacillus subtilis genome sequence.</title>
        <authorList>
            <person name="Medigue C."/>
            <person name="Rose M."/>
            <person name="Viari A."/>
            <person name="Danchin A."/>
        </authorList>
    </citation>
    <scope>SEQUENCE REVISION</scope>
</reference>
<organism>
    <name type="scientific">Bacillus subtilis (strain 168)</name>
    <dbReference type="NCBI Taxonomy" id="224308"/>
    <lineage>
        <taxon>Bacteria</taxon>
        <taxon>Bacillati</taxon>
        <taxon>Bacillota</taxon>
        <taxon>Bacilli</taxon>
        <taxon>Bacillales</taxon>
        <taxon>Bacillaceae</taxon>
        <taxon>Bacillus</taxon>
    </lineage>
</organism>
<accession>P49851</accession>